<proteinExistence type="inferred from homology"/>
<feature type="chain" id="PRO_1000066039" description="Alanine racemase">
    <location>
        <begin position="1"/>
        <end position="356"/>
    </location>
</feature>
<feature type="active site" description="Proton acceptor; specific for D-alanine" evidence="1">
    <location>
        <position position="35"/>
    </location>
</feature>
<feature type="active site" description="Proton acceptor; specific for L-alanine" evidence="1">
    <location>
        <position position="253"/>
    </location>
</feature>
<feature type="binding site" evidence="1">
    <location>
        <position position="130"/>
    </location>
    <ligand>
        <name>substrate</name>
    </ligand>
</feature>
<feature type="binding site" evidence="1">
    <location>
        <position position="301"/>
    </location>
    <ligand>
        <name>substrate</name>
    </ligand>
</feature>
<feature type="modified residue" description="N6-(pyridoxal phosphate)lysine" evidence="1">
    <location>
        <position position="35"/>
    </location>
</feature>
<name>ALR_SODGM</name>
<protein>
    <recommendedName>
        <fullName evidence="1">Alanine racemase</fullName>
        <ecNumber evidence="1">5.1.1.1</ecNumber>
    </recommendedName>
</protein>
<accession>Q2NTA8</accession>
<reference key="1">
    <citation type="journal article" date="2006" name="Genome Res.">
        <title>Massive genome erosion and functional adaptations provide insights into the symbiotic lifestyle of Sodalis glossinidius in the tsetse host.</title>
        <authorList>
            <person name="Toh H."/>
            <person name="Weiss B.L."/>
            <person name="Perkin S.A.H."/>
            <person name="Yamashita A."/>
            <person name="Oshima K."/>
            <person name="Hattori M."/>
            <person name="Aksoy S."/>
        </authorList>
    </citation>
    <scope>NUCLEOTIDE SEQUENCE [LARGE SCALE GENOMIC DNA]</scope>
    <source>
        <strain>morsitans</strain>
    </source>
</reference>
<gene>
    <name type="primary">alr</name>
    <name type="ordered locus">SG1342</name>
</gene>
<keyword id="KW-0413">Isomerase</keyword>
<keyword id="KW-0663">Pyridoxal phosphate</keyword>
<sequence>MPRPIVAKVDSAVLASNLSIVRRHAPQAQVWSVVKANGYGHGLNTVWQGLQQTDGFALLDLHEAVVLREKGWRGPILLLEGFFQPADLAVIDRYRLTTVVHSDWQIEALRRMTPRAPLDIYLKLNSGMNRLGFSERALPGAWQSLNALKHVATLTLMSHFAYADMPEGVEGQMAVVARAGEGLTGPRCLANSAATLWHPATHGQWVRPGIILYGASPSGNWQDIAASGLRPVMTLQSELIAVQSVPAGGRIGYGGRHRVSETHRVGVVACGYADGYPRHAPTGTPILVDGVRTSTLGAVSMDMLMVDLQLCPKARIGSAVELWGDHVKIDEVAASAGTLGYELMSALAPRVTVQIR</sequence>
<dbReference type="EC" id="5.1.1.1" evidence="1"/>
<dbReference type="EMBL" id="AP008232">
    <property type="protein sequence ID" value="BAE74617.1"/>
    <property type="molecule type" value="Genomic_DNA"/>
</dbReference>
<dbReference type="RefSeq" id="WP_011411170.1">
    <property type="nucleotide sequence ID" value="NC_007712.1"/>
</dbReference>
<dbReference type="SMR" id="Q2NTA8"/>
<dbReference type="STRING" id="343509.SG1342"/>
<dbReference type="KEGG" id="sgl:SG1342"/>
<dbReference type="eggNOG" id="COG0787">
    <property type="taxonomic scope" value="Bacteria"/>
</dbReference>
<dbReference type="HOGENOM" id="CLU_028393_1_0_6"/>
<dbReference type="OrthoDB" id="9813814at2"/>
<dbReference type="BioCyc" id="SGLO343509:SGP1_RS11800-MONOMER"/>
<dbReference type="UniPathway" id="UPA00042">
    <property type="reaction ID" value="UER00497"/>
</dbReference>
<dbReference type="Proteomes" id="UP000001932">
    <property type="component" value="Chromosome"/>
</dbReference>
<dbReference type="GO" id="GO:0005829">
    <property type="term" value="C:cytosol"/>
    <property type="evidence" value="ECO:0007669"/>
    <property type="project" value="TreeGrafter"/>
</dbReference>
<dbReference type="GO" id="GO:0008784">
    <property type="term" value="F:alanine racemase activity"/>
    <property type="evidence" value="ECO:0007669"/>
    <property type="project" value="UniProtKB-UniRule"/>
</dbReference>
<dbReference type="GO" id="GO:0030170">
    <property type="term" value="F:pyridoxal phosphate binding"/>
    <property type="evidence" value="ECO:0007669"/>
    <property type="project" value="UniProtKB-UniRule"/>
</dbReference>
<dbReference type="GO" id="GO:0030632">
    <property type="term" value="P:D-alanine biosynthetic process"/>
    <property type="evidence" value="ECO:0007669"/>
    <property type="project" value="UniProtKB-UniRule"/>
</dbReference>
<dbReference type="CDD" id="cd06827">
    <property type="entry name" value="PLPDE_III_AR_proteobact"/>
    <property type="match status" value="1"/>
</dbReference>
<dbReference type="FunFam" id="3.20.20.10:FF:000002">
    <property type="entry name" value="Alanine racemase"/>
    <property type="match status" value="1"/>
</dbReference>
<dbReference type="Gene3D" id="3.20.20.10">
    <property type="entry name" value="Alanine racemase"/>
    <property type="match status" value="1"/>
</dbReference>
<dbReference type="Gene3D" id="2.40.37.10">
    <property type="entry name" value="Lyase, Ornithine Decarboxylase, Chain A, domain 1"/>
    <property type="match status" value="1"/>
</dbReference>
<dbReference type="HAMAP" id="MF_01201">
    <property type="entry name" value="Ala_racemase"/>
    <property type="match status" value="1"/>
</dbReference>
<dbReference type="InterPro" id="IPR000821">
    <property type="entry name" value="Ala_racemase"/>
</dbReference>
<dbReference type="InterPro" id="IPR009006">
    <property type="entry name" value="Ala_racemase/Decarboxylase_C"/>
</dbReference>
<dbReference type="InterPro" id="IPR011079">
    <property type="entry name" value="Ala_racemase_C"/>
</dbReference>
<dbReference type="InterPro" id="IPR001608">
    <property type="entry name" value="Ala_racemase_N"/>
</dbReference>
<dbReference type="InterPro" id="IPR020622">
    <property type="entry name" value="Ala_racemase_pyridoxalP-BS"/>
</dbReference>
<dbReference type="InterPro" id="IPR029066">
    <property type="entry name" value="PLP-binding_barrel"/>
</dbReference>
<dbReference type="NCBIfam" id="TIGR00492">
    <property type="entry name" value="alr"/>
    <property type="match status" value="1"/>
</dbReference>
<dbReference type="NCBIfam" id="NF002970">
    <property type="entry name" value="PRK03646.1"/>
    <property type="match status" value="1"/>
</dbReference>
<dbReference type="PANTHER" id="PTHR30511">
    <property type="entry name" value="ALANINE RACEMASE"/>
    <property type="match status" value="1"/>
</dbReference>
<dbReference type="PANTHER" id="PTHR30511:SF0">
    <property type="entry name" value="ALANINE RACEMASE, CATABOLIC-RELATED"/>
    <property type="match status" value="1"/>
</dbReference>
<dbReference type="Pfam" id="PF00842">
    <property type="entry name" value="Ala_racemase_C"/>
    <property type="match status" value="1"/>
</dbReference>
<dbReference type="Pfam" id="PF01168">
    <property type="entry name" value="Ala_racemase_N"/>
    <property type="match status" value="1"/>
</dbReference>
<dbReference type="PRINTS" id="PR00992">
    <property type="entry name" value="ALARACEMASE"/>
</dbReference>
<dbReference type="SMART" id="SM01005">
    <property type="entry name" value="Ala_racemase_C"/>
    <property type="match status" value="1"/>
</dbReference>
<dbReference type="SUPFAM" id="SSF50621">
    <property type="entry name" value="Alanine racemase C-terminal domain-like"/>
    <property type="match status" value="1"/>
</dbReference>
<dbReference type="SUPFAM" id="SSF51419">
    <property type="entry name" value="PLP-binding barrel"/>
    <property type="match status" value="1"/>
</dbReference>
<dbReference type="PROSITE" id="PS00395">
    <property type="entry name" value="ALANINE_RACEMASE"/>
    <property type="match status" value="1"/>
</dbReference>
<evidence type="ECO:0000255" key="1">
    <source>
        <dbReference type="HAMAP-Rule" id="MF_01201"/>
    </source>
</evidence>
<organism>
    <name type="scientific">Sodalis glossinidius (strain morsitans)</name>
    <dbReference type="NCBI Taxonomy" id="343509"/>
    <lineage>
        <taxon>Bacteria</taxon>
        <taxon>Pseudomonadati</taxon>
        <taxon>Pseudomonadota</taxon>
        <taxon>Gammaproteobacteria</taxon>
        <taxon>Enterobacterales</taxon>
        <taxon>Bruguierivoracaceae</taxon>
        <taxon>Sodalis</taxon>
    </lineage>
</organism>
<comment type="function">
    <text evidence="1">Catalyzes the interconversion of L-alanine and D-alanine. May also act on other amino acids.</text>
</comment>
<comment type="catalytic activity">
    <reaction evidence="1">
        <text>L-alanine = D-alanine</text>
        <dbReference type="Rhea" id="RHEA:20249"/>
        <dbReference type="ChEBI" id="CHEBI:57416"/>
        <dbReference type="ChEBI" id="CHEBI:57972"/>
        <dbReference type="EC" id="5.1.1.1"/>
    </reaction>
</comment>
<comment type="cofactor">
    <cofactor evidence="1">
        <name>pyridoxal 5'-phosphate</name>
        <dbReference type="ChEBI" id="CHEBI:597326"/>
    </cofactor>
</comment>
<comment type="pathway">
    <text evidence="1">Amino-acid biosynthesis; D-alanine biosynthesis; D-alanine from L-alanine: step 1/1.</text>
</comment>
<comment type="similarity">
    <text evidence="1">Belongs to the alanine racemase family.</text>
</comment>